<comment type="function">
    <text evidence="1">Synthesizes nicotianamine, a polyamine that is the first intermediate in the synthesis of the phytosiderophores of the mugineic acid type found in gramineae which serves as a sensor for the physiological iron status within the plant, and/or might be involved in the transport of iron.</text>
</comment>
<comment type="catalytic activity">
    <reaction>
        <text>3 S-adenosyl-L-methionine = nicotianamine + 3 S-methyl-5'-thioadenosine + 3 H(+)</text>
        <dbReference type="Rhea" id="RHEA:16481"/>
        <dbReference type="ChEBI" id="CHEBI:15378"/>
        <dbReference type="ChEBI" id="CHEBI:17509"/>
        <dbReference type="ChEBI" id="CHEBI:58249"/>
        <dbReference type="ChEBI" id="CHEBI:59789"/>
        <dbReference type="EC" id="2.5.1.43"/>
    </reaction>
</comment>
<comment type="tissue specificity">
    <text>In roots but not in leaves.</text>
</comment>
<comment type="induction">
    <text>By iron deficiency.</text>
</comment>
<comment type="similarity">
    <text evidence="3">Belongs to the nicotianamine synthase (NAS)-like family.</text>
</comment>
<keyword id="KW-0903">Direct protein sequencing</keyword>
<keyword id="KW-0949">S-adenosyl-L-methionine</keyword>
<keyword id="KW-0808">Transferase</keyword>
<dbReference type="EC" id="2.5.1.43"/>
<dbReference type="EMBL" id="AB010086">
    <property type="protein sequence ID" value="BAA74580.1"/>
    <property type="molecule type" value="mRNA"/>
</dbReference>
<dbReference type="SMR" id="Q9ZQV9"/>
<dbReference type="BioCyc" id="MetaCyc:MONOMER-13940"/>
<dbReference type="BRENDA" id="2.5.1.43">
    <property type="organism ID" value="2687"/>
</dbReference>
<dbReference type="ExpressionAtlas" id="Q9ZQV9">
    <property type="expression patterns" value="baseline"/>
</dbReference>
<dbReference type="GO" id="GO:0030410">
    <property type="term" value="F:nicotianamine synthase activity"/>
    <property type="evidence" value="ECO:0007669"/>
    <property type="project" value="UniProtKB-EC"/>
</dbReference>
<dbReference type="GO" id="GO:0030418">
    <property type="term" value="P:nicotianamine biosynthetic process"/>
    <property type="evidence" value="ECO:0007669"/>
    <property type="project" value="InterPro"/>
</dbReference>
<dbReference type="Gene3D" id="3.40.50.150">
    <property type="entry name" value="Vaccinia Virus protein VP39"/>
    <property type="match status" value="1"/>
</dbReference>
<dbReference type="InterPro" id="IPR004298">
    <property type="entry name" value="Nicotian_synth"/>
</dbReference>
<dbReference type="InterPro" id="IPR029063">
    <property type="entry name" value="SAM-dependent_MTases_sf"/>
</dbReference>
<dbReference type="PANTHER" id="PTHR32266:SF10">
    <property type="entry name" value="NICOTIANAMINE SYNTHASE 2"/>
    <property type="match status" value="1"/>
</dbReference>
<dbReference type="PANTHER" id="PTHR32266">
    <property type="entry name" value="NICOTIANAMINE SYNTHASE 3"/>
    <property type="match status" value="1"/>
</dbReference>
<dbReference type="Pfam" id="PF03059">
    <property type="entry name" value="NAS"/>
    <property type="match status" value="1"/>
</dbReference>
<dbReference type="SUPFAM" id="SSF53335">
    <property type="entry name" value="S-adenosyl-L-methionine-dependent methyltransferases"/>
    <property type="match status" value="1"/>
</dbReference>
<dbReference type="PROSITE" id="PS51142">
    <property type="entry name" value="NAS"/>
    <property type="match status" value="1"/>
</dbReference>
<proteinExistence type="evidence at protein level"/>
<gene>
    <name type="primary">NAS1</name>
</gene>
<feature type="initiator methionine" description="Removed" evidence="2">
    <location>
        <position position="1"/>
    </location>
</feature>
<feature type="chain" id="PRO_0000212704" description="Nicotianamine synthase 1">
    <location>
        <begin position="2"/>
        <end position="328"/>
    </location>
</feature>
<sequence>MDAQNKEVAALIEKIAGIQAAIAELPSLSPSPEVDRLFTDLVTACVPPSPVDVTKLSPEHQRMREALIRLCSAAEGKLEAHYADLLATFDNPLDHLGLFPYYSNYVNLSRLEYELLARHVPGIAPARVAFVGSGPLPFSSLVLAAHHLPETQFDNYDLCGAANERARKLFGATADGVGARMSFHTADVADLTQELGAYDVVFLAALVGMAAEEKAKVIAHLGAHMVEGASLVVRSARPRGFLYPIVDPEDIRRGGFEVLAVHHPEGEVINSVIVARKAVEAQLSGPQNGDAHARGAVPLVSPPCNFSTKMEASALEKSEELTAKELAF</sequence>
<name>NAS1_HORVU</name>
<organism>
    <name type="scientific">Hordeum vulgare</name>
    <name type="common">Barley</name>
    <dbReference type="NCBI Taxonomy" id="4513"/>
    <lineage>
        <taxon>Eukaryota</taxon>
        <taxon>Viridiplantae</taxon>
        <taxon>Streptophyta</taxon>
        <taxon>Embryophyta</taxon>
        <taxon>Tracheophyta</taxon>
        <taxon>Spermatophyta</taxon>
        <taxon>Magnoliopsida</taxon>
        <taxon>Liliopsida</taxon>
        <taxon>Poales</taxon>
        <taxon>Poaceae</taxon>
        <taxon>BOP clade</taxon>
        <taxon>Pooideae</taxon>
        <taxon>Triticodae</taxon>
        <taxon>Triticeae</taxon>
        <taxon>Hordeinae</taxon>
        <taxon>Hordeum</taxon>
    </lineage>
</organism>
<evidence type="ECO:0000250" key="1"/>
<evidence type="ECO:0000269" key="2">
    <source>
    </source>
</evidence>
<evidence type="ECO:0000305" key="3"/>
<protein>
    <recommendedName>
        <fullName>Nicotianamine synthase 1</fullName>
        <ecNumber>2.5.1.43</ecNumber>
    </recommendedName>
    <alternativeName>
        <fullName>HvNAS1</fullName>
    </alternativeName>
    <alternativeName>
        <fullName>S-adenosyl-L-methionine:S-adenosyl-L-methionine:S-adenosyl-methionine 3-amino-3-carboxypropyltransferase 1</fullName>
    </alternativeName>
</protein>
<accession>Q9ZQV9</accession>
<reference key="1">
    <citation type="journal article" date="1999" name="Plant Physiol.">
        <title>Cloning of nicotianamine synthase genes, novel genes involved in the biosynthesis of phytosiderophores.</title>
        <authorList>
            <person name="Higuchi K."/>
            <person name="Suzuki K."/>
            <person name="Nakanishi H."/>
            <person name="Yamaguchi H."/>
            <person name="Nishizawa N.-K."/>
            <person name="Mori S."/>
        </authorList>
    </citation>
    <scope>NUCLEOTIDE SEQUENCE [MRNA]</scope>
    <scope>PROTEIN SEQUENCE OF 2-20; 64-70; 182-244 AND 248-267</scope>
    <source>
        <strain>cv. Ehimehadaka No.1</strain>
        <tissue>Root</tissue>
    </source>
</reference>